<protein>
    <recommendedName>
        <fullName evidence="1">Transcription attenuation protein MtrB</fullName>
    </recommendedName>
    <alternativeName>
        <fullName evidence="1">Trp RNA-binding attenuation protein</fullName>
        <shortName evidence="1">TRAP</shortName>
    </alternativeName>
    <alternativeName>
        <fullName evidence="1">Tryptophan RNA-binding attenuator protein</fullName>
    </alternativeName>
</protein>
<gene>
    <name evidence="1" type="primary">mtrB</name>
    <name type="ordered locus">RBAM_020930</name>
</gene>
<accession>A7Z629</accession>
<evidence type="ECO:0000255" key="1">
    <source>
        <dbReference type="HAMAP-Rule" id="MF_00798"/>
    </source>
</evidence>
<comment type="function">
    <text evidence="1">Required for transcription attenuation control in the Trp operon. This trans-acting factor seems to recognize a 10 bases nucleotide sequence in the Trp leader transcript causing transcription termination. Binds the leader RNA only in presence of L-tryptophan.</text>
</comment>
<comment type="subunit">
    <text evidence="1">Oligomer of 11 identical subunits arranged in doughnut-like structure.</text>
</comment>
<comment type="similarity">
    <text evidence="1">Belongs to the MtrB family.</text>
</comment>
<dbReference type="EMBL" id="CP000560">
    <property type="protein sequence ID" value="ABS74455.1"/>
    <property type="molecule type" value="Genomic_DNA"/>
</dbReference>
<dbReference type="RefSeq" id="WP_003153449.1">
    <property type="nucleotide sequence ID" value="NC_009725.2"/>
</dbReference>
<dbReference type="SMR" id="A7Z629"/>
<dbReference type="GeneID" id="93081228"/>
<dbReference type="KEGG" id="bay:RBAM_020930"/>
<dbReference type="HOGENOM" id="CLU_180875_0_0_9"/>
<dbReference type="Proteomes" id="UP000001120">
    <property type="component" value="Chromosome"/>
</dbReference>
<dbReference type="GO" id="GO:0003723">
    <property type="term" value="F:RNA binding"/>
    <property type="evidence" value="ECO:0007669"/>
    <property type="project" value="UniProtKB-UniRule"/>
</dbReference>
<dbReference type="GO" id="GO:0006353">
    <property type="term" value="P:DNA-templated transcription termination"/>
    <property type="evidence" value="ECO:0007669"/>
    <property type="project" value="InterPro"/>
</dbReference>
<dbReference type="GO" id="GO:0006355">
    <property type="term" value="P:regulation of DNA-templated transcription"/>
    <property type="evidence" value="ECO:0007669"/>
    <property type="project" value="InterPro"/>
</dbReference>
<dbReference type="Gene3D" id="2.60.40.50">
    <property type="entry name" value="TRAP-like"/>
    <property type="match status" value="1"/>
</dbReference>
<dbReference type="HAMAP" id="MF_00798">
    <property type="entry name" value="Trp_attenuator"/>
    <property type="match status" value="1"/>
</dbReference>
<dbReference type="InterPro" id="IPR000824">
    <property type="entry name" value="MtrB"/>
</dbReference>
<dbReference type="InterPro" id="IPR016031">
    <property type="entry name" value="Trp_RNA-bd_attenuator-like_dom"/>
</dbReference>
<dbReference type="InterPro" id="IPR023558">
    <property type="entry name" value="Trp_RNA-bd_attenuator_dom"/>
</dbReference>
<dbReference type="NCBIfam" id="NF009724">
    <property type="entry name" value="PRK13251.1"/>
    <property type="match status" value="1"/>
</dbReference>
<dbReference type="Pfam" id="PF02081">
    <property type="entry name" value="TrpBP"/>
    <property type="match status" value="1"/>
</dbReference>
<dbReference type="PRINTS" id="PR00687">
    <property type="entry name" value="TRPRNAAP"/>
</dbReference>
<dbReference type="SUPFAM" id="SSF51219">
    <property type="entry name" value="TRAP-like"/>
    <property type="match status" value="1"/>
</dbReference>
<organism>
    <name type="scientific">Bacillus velezensis (strain DSM 23117 / BGSC 10A6 / LMG 26770 / FZB42)</name>
    <name type="common">Bacillus amyloliquefaciens subsp. plantarum</name>
    <dbReference type="NCBI Taxonomy" id="326423"/>
    <lineage>
        <taxon>Bacteria</taxon>
        <taxon>Bacillati</taxon>
        <taxon>Bacillota</taxon>
        <taxon>Bacilli</taxon>
        <taxon>Bacillales</taxon>
        <taxon>Bacillaceae</taxon>
        <taxon>Bacillus</taxon>
        <taxon>Bacillus amyloliquefaciens group</taxon>
    </lineage>
</organism>
<proteinExistence type="inferred from homology"/>
<keyword id="KW-0694">RNA-binding</keyword>
<keyword id="KW-0804">Transcription</keyword>
<keyword id="KW-0805">Transcription regulation</keyword>
<reference key="1">
    <citation type="journal article" date="2007" name="Nat. Biotechnol.">
        <title>Comparative analysis of the complete genome sequence of the plant growth-promoting bacterium Bacillus amyloliquefaciens FZB42.</title>
        <authorList>
            <person name="Chen X.H."/>
            <person name="Koumoutsi A."/>
            <person name="Scholz R."/>
            <person name="Eisenreich A."/>
            <person name="Schneider K."/>
            <person name="Heinemeyer I."/>
            <person name="Morgenstern B."/>
            <person name="Voss B."/>
            <person name="Hess W.R."/>
            <person name="Reva O."/>
            <person name="Junge H."/>
            <person name="Voigt B."/>
            <person name="Jungblut P.R."/>
            <person name="Vater J."/>
            <person name="Suessmuth R."/>
            <person name="Liesegang H."/>
            <person name="Strittmatter A."/>
            <person name="Gottschalk G."/>
            <person name="Borriss R."/>
        </authorList>
    </citation>
    <scope>NUCLEOTIDE SEQUENCE [LARGE SCALE GENOMIC DNA]</scope>
    <source>
        <strain>DSM 23117 / BGSC 10A6 / LMG 26770 / FZB42</strain>
    </source>
</reference>
<sequence>MNSKHSSDFVVIKAVEDGVNVIGLTRGTDTKFHHSEKLDKGEVIIAQFTEHTSAIKVRGNALIQTAYGEMNSEKK</sequence>
<name>MTRB_BACVZ</name>
<feature type="chain" id="PRO_1000046970" description="Transcription attenuation protein MtrB">
    <location>
        <begin position="1"/>
        <end position="75"/>
    </location>
</feature>